<organism>
    <name type="scientific">Escherichia coli O6:H1 (strain CFT073 / ATCC 700928 / UPEC)</name>
    <dbReference type="NCBI Taxonomy" id="199310"/>
    <lineage>
        <taxon>Bacteria</taxon>
        <taxon>Pseudomonadati</taxon>
        <taxon>Pseudomonadota</taxon>
        <taxon>Gammaproteobacteria</taxon>
        <taxon>Enterobacterales</taxon>
        <taxon>Enterobacteriaceae</taxon>
        <taxon>Escherichia</taxon>
    </lineage>
</organism>
<comment type="function">
    <text evidence="1">Involved in the active translocation of vitamin B12 (cyanocobalamin) across the outer membrane to the periplasmic space. It derives its energy for transport by interacting with the trans-periplasmic membrane protein TonB.</text>
</comment>
<comment type="subcellular location">
    <subcellularLocation>
        <location evidence="1">Cell outer membrane</location>
        <topology evidence="1">Multi-pass membrane protein</topology>
    </subcellularLocation>
</comment>
<comment type="similarity">
    <text evidence="1">Belongs to the TonB-dependent receptor family. BtuB (TC 1.B.14.3.1) subfamily.</text>
</comment>
<comment type="sequence caution" evidence="3">
    <conflict type="erroneous initiation">
        <sequence resource="EMBL-CDS" id="AAN83357"/>
    </conflict>
</comment>
<gene>
    <name evidence="1" type="primary">btuB</name>
    <name type="ordered locus">c4929</name>
</gene>
<sequence length="614" mass="68397">MIKKASLLTACSVTAFSAWAQDTSPDTLVVTANRFEQPRSTVLAPTTVVTRQDIDRWQSTSVNDVLRRLPGVDITQNGGSGQLSSIFIRGTNASHVLVLIDGVRLNLAGVSGSADLSQFPIALVQRVEYIRGPRSAVYGSDAIGGVVNIITTRDHPGTEISAGWGSNSYQNYDVSTQQQLGDKTRVTLLGDYAHTHGYDVVAYGNTGTQAQPDNDGFLSKTLYGALEHNFTDAWSGFVRGYGYDNRTNYDAYYSPGLPLVDTRKLYSQSWDAGLRYNGELIKSQLITSYSHSKDYNYDPHYGRYDSSATLDEMKQYTVQWANNIIIGHGNIGAGVDWQKQSTAPGTAYVEDGYDQRNTGIYLTGLQQVGDFTFEGAGRSDDNSQFGRHGTWQTSAGWEFIEGYRFIASYGTSYKAPNLGQLYGSYGNPNLNPEKSKQWEGAFEGLTAGVNWRISGYRNDVSDLIDYDDHTLKYYNEGKARIKGVEATANFDTGPLTHTVSYDYVDARNAITDTPLLRRAKQQVKYQLDWQLYDFDWGITYQYLGTRYDKDYSSYPYQTVKMGGVSLWDLAVAYPVTSHLTVRGKIANLFDKDYETVYGYQTAGREYTLXGSYTF</sequence>
<keyword id="KW-0106">Calcium</keyword>
<keyword id="KW-0998">Cell outer membrane</keyword>
<keyword id="KW-0406">Ion transport</keyword>
<keyword id="KW-0472">Membrane</keyword>
<keyword id="KW-0479">Metal-binding</keyword>
<keyword id="KW-0626">Porin</keyword>
<keyword id="KW-1185">Reference proteome</keyword>
<keyword id="KW-0732">Signal</keyword>
<keyword id="KW-0798">TonB box</keyword>
<keyword id="KW-0812">Transmembrane</keyword>
<keyword id="KW-1134">Transmembrane beta strand</keyword>
<keyword id="KW-0813">Transport</keyword>
<reference key="1">
    <citation type="journal article" date="2002" name="Proc. Natl. Acad. Sci. U.S.A.">
        <title>Extensive mosaic structure revealed by the complete genome sequence of uropathogenic Escherichia coli.</title>
        <authorList>
            <person name="Welch R.A."/>
            <person name="Burland V."/>
            <person name="Plunkett G. III"/>
            <person name="Redford P."/>
            <person name="Roesch P."/>
            <person name="Rasko D."/>
            <person name="Buckles E.L."/>
            <person name="Liou S.-R."/>
            <person name="Boutin A."/>
            <person name="Hackett J."/>
            <person name="Stroud D."/>
            <person name="Mayhew G.F."/>
            <person name="Rose D.J."/>
            <person name="Zhou S."/>
            <person name="Schwartz D.C."/>
            <person name="Perna N.T."/>
            <person name="Mobley H.L.T."/>
            <person name="Donnenberg M.S."/>
            <person name="Blattner F.R."/>
        </authorList>
    </citation>
    <scope>NUCLEOTIDE SEQUENCE [LARGE SCALE GENOMIC DNA]</scope>
    <source>
        <strain>CFT073 / ATCC 700928 / UPEC</strain>
    </source>
</reference>
<name>BTUB_ECOL6</name>
<proteinExistence type="inferred from homology"/>
<evidence type="ECO:0000255" key="1">
    <source>
        <dbReference type="HAMAP-Rule" id="MF_01531"/>
    </source>
</evidence>
<evidence type="ECO:0000255" key="2">
    <source>
        <dbReference type="PROSITE-ProRule" id="PRU01360"/>
    </source>
</evidence>
<evidence type="ECO:0000305" key="3"/>
<accession>Q8CVJ0</accession>
<dbReference type="EMBL" id="AE014075">
    <property type="protein sequence ID" value="AAN83357.1"/>
    <property type="status" value="ALT_INIT"/>
    <property type="molecule type" value="Genomic_DNA"/>
</dbReference>
<dbReference type="RefSeq" id="WP_011076716.1">
    <property type="nucleotide sequence ID" value="NC_004431.1"/>
</dbReference>
<dbReference type="STRING" id="199310.c4929"/>
<dbReference type="KEGG" id="ecc:c4929"/>
<dbReference type="eggNOG" id="COG4206">
    <property type="taxonomic scope" value="Bacteria"/>
</dbReference>
<dbReference type="HOGENOM" id="CLU_008287_18_5_6"/>
<dbReference type="Proteomes" id="UP000001410">
    <property type="component" value="Chromosome"/>
</dbReference>
<dbReference type="GO" id="GO:0009279">
    <property type="term" value="C:cell outer membrane"/>
    <property type="evidence" value="ECO:0007669"/>
    <property type="project" value="UniProtKB-SubCell"/>
</dbReference>
<dbReference type="GO" id="GO:0046930">
    <property type="term" value="C:pore complex"/>
    <property type="evidence" value="ECO:0007669"/>
    <property type="project" value="UniProtKB-KW"/>
</dbReference>
<dbReference type="GO" id="GO:0015420">
    <property type="term" value="F:ABC-type vitamin B12 transporter activity"/>
    <property type="evidence" value="ECO:0007669"/>
    <property type="project" value="InterPro"/>
</dbReference>
<dbReference type="GO" id="GO:0046872">
    <property type="term" value="F:metal ion binding"/>
    <property type="evidence" value="ECO:0007669"/>
    <property type="project" value="UniProtKB-KW"/>
</dbReference>
<dbReference type="GO" id="GO:0015288">
    <property type="term" value="F:porin activity"/>
    <property type="evidence" value="ECO:0007669"/>
    <property type="project" value="UniProtKB-KW"/>
</dbReference>
<dbReference type="GO" id="GO:0006811">
    <property type="term" value="P:monoatomic ion transport"/>
    <property type="evidence" value="ECO:0007669"/>
    <property type="project" value="UniProtKB-KW"/>
</dbReference>
<dbReference type="CDD" id="cd01347">
    <property type="entry name" value="ligand_gated_channel"/>
    <property type="match status" value="1"/>
</dbReference>
<dbReference type="FunFam" id="2.170.130.10:FF:000002">
    <property type="entry name" value="Vitamin B12 transporter BtuB"/>
    <property type="match status" value="1"/>
</dbReference>
<dbReference type="FunFam" id="2.40.170.20:FF:000001">
    <property type="entry name" value="Vitamin B12 transporter BtuB"/>
    <property type="match status" value="1"/>
</dbReference>
<dbReference type="Gene3D" id="2.40.170.20">
    <property type="entry name" value="TonB-dependent receptor, beta-barrel domain"/>
    <property type="match status" value="1"/>
</dbReference>
<dbReference type="Gene3D" id="2.170.130.10">
    <property type="entry name" value="TonB-dependent receptor, plug domain"/>
    <property type="match status" value="1"/>
</dbReference>
<dbReference type="HAMAP" id="MF_01531">
    <property type="entry name" value="BtuB"/>
    <property type="match status" value="1"/>
</dbReference>
<dbReference type="InterPro" id="IPR010101">
    <property type="entry name" value="B12_transptr_BtuB"/>
</dbReference>
<dbReference type="InterPro" id="IPR012910">
    <property type="entry name" value="Plug_dom"/>
</dbReference>
<dbReference type="InterPro" id="IPR037066">
    <property type="entry name" value="Plug_dom_sf"/>
</dbReference>
<dbReference type="InterPro" id="IPR039426">
    <property type="entry name" value="TonB-dep_rcpt-like"/>
</dbReference>
<dbReference type="InterPro" id="IPR000531">
    <property type="entry name" value="TonB-dep_rcpt_b-brl"/>
</dbReference>
<dbReference type="InterPro" id="IPR010916">
    <property type="entry name" value="TonB_box_CS"/>
</dbReference>
<dbReference type="InterPro" id="IPR036942">
    <property type="entry name" value="TonB_rcpt_b-brl_sf"/>
</dbReference>
<dbReference type="NCBIfam" id="NF007926">
    <property type="entry name" value="PRK10641.1"/>
    <property type="match status" value="1"/>
</dbReference>
<dbReference type="NCBIfam" id="TIGR01779">
    <property type="entry name" value="TonB-B12"/>
    <property type="match status" value="1"/>
</dbReference>
<dbReference type="PANTHER" id="PTHR30069:SF53">
    <property type="entry name" value="COLICIN I RECEPTOR-RELATED"/>
    <property type="match status" value="1"/>
</dbReference>
<dbReference type="PANTHER" id="PTHR30069">
    <property type="entry name" value="TONB-DEPENDENT OUTER MEMBRANE RECEPTOR"/>
    <property type="match status" value="1"/>
</dbReference>
<dbReference type="Pfam" id="PF07715">
    <property type="entry name" value="Plug"/>
    <property type="match status" value="1"/>
</dbReference>
<dbReference type="Pfam" id="PF00593">
    <property type="entry name" value="TonB_dep_Rec_b-barrel"/>
    <property type="match status" value="1"/>
</dbReference>
<dbReference type="SUPFAM" id="SSF56935">
    <property type="entry name" value="Porins"/>
    <property type="match status" value="1"/>
</dbReference>
<dbReference type="PROSITE" id="PS00430">
    <property type="entry name" value="TONB_DEPENDENT_REC_1"/>
    <property type="match status" value="1"/>
</dbReference>
<dbReference type="PROSITE" id="PS01156">
    <property type="entry name" value="TONB_DEPENDENT_REC_2"/>
    <property type="match status" value="1"/>
</dbReference>
<dbReference type="PROSITE" id="PS52016">
    <property type="entry name" value="TONB_DEPENDENT_REC_3"/>
    <property type="match status" value="1"/>
</dbReference>
<protein>
    <recommendedName>
        <fullName evidence="1">Vitamin B12 transporter BtuB</fullName>
    </recommendedName>
    <alternativeName>
        <fullName evidence="1">Cobalamin receptor</fullName>
    </alternativeName>
    <alternativeName>
        <fullName evidence="1">Outer membrane cobalamin translocator</fullName>
    </alternativeName>
</protein>
<feature type="signal peptide" evidence="1">
    <location>
        <begin position="1"/>
        <end position="20"/>
    </location>
</feature>
<feature type="chain" id="PRO_0000003481" description="Vitamin B12 transporter BtuB">
    <location>
        <begin position="21"/>
        <end position="614"/>
    </location>
</feature>
<feature type="transmembrane region" description="Beta stranded" evidence="1">
    <location>
        <begin position="158"/>
        <end position="165"/>
    </location>
</feature>
<feature type="transmembrane region" description="Beta stranded" evidence="1">
    <location>
        <begin position="169"/>
        <end position="178"/>
    </location>
</feature>
<feature type="transmembrane region" description="Beta stranded" evidence="1">
    <location>
        <begin position="184"/>
        <end position="195"/>
    </location>
</feature>
<feature type="transmembrane region" description="Beta stranded" evidence="1">
    <location>
        <begin position="217"/>
        <end position="227"/>
    </location>
</feature>
<feature type="transmembrane region" description="Beta stranded" evidence="1">
    <location>
        <begin position="232"/>
        <end position="248"/>
    </location>
</feature>
<feature type="transmembrane region" description="Beta stranded" evidence="1">
    <location>
        <begin position="263"/>
        <end position="277"/>
    </location>
</feature>
<feature type="transmembrane region" description="Beta stranded" evidence="1">
    <location>
        <begin position="279"/>
        <end position="296"/>
    </location>
</feature>
<feature type="transmembrane region" description="Beta stranded" evidence="1">
    <location>
        <begin position="309"/>
        <end position="325"/>
    </location>
</feature>
<feature type="transmembrane region" description="Beta stranded" evidence="1">
    <location>
        <begin position="328"/>
        <end position="337"/>
    </location>
</feature>
<feature type="transmembrane region" description="Beta stranded" evidence="1">
    <location>
        <begin position="353"/>
        <end position="369"/>
    </location>
</feature>
<feature type="transmembrane region" description="Beta stranded" evidence="1">
    <location>
        <begin position="371"/>
        <end position="381"/>
    </location>
</feature>
<feature type="transmembrane region" description="Beta stranded" evidence="1">
    <location>
        <begin position="385"/>
        <end position="400"/>
    </location>
</feature>
<feature type="transmembrane region" description="Beta stranded" evidence="1">
    <location>
        <begin position="403"/>
        <end position="417"/>
    </location>
</feature>
<feature type="transmembrane region" description="Beta stranded" evidence="1">
    <location>
        <begin position="434"/>
        <end position="443"/>
    </location>
</feature>
<feature type="transmembrane region" description="Beta stranded" evidence="1">
    <location>
        <begin position="449"/>
        <end position="458"/>
    </location>
</feature>
<feature type="transmembrane region" description="Beta stranded" evidence="1">
    <location>
        <begin position="473"/>
        <end position="490"/>
    </location>
</feature>
<feature type="transmembrane region" description="Beta stranded" evidence="1">
    <location>
        <begin position="494"/>
        <end position="509"/>
    </location>
</feature>
<feature type="transmembrane region" description="Beta stranded" evidence="1">
    <location>
        <begin position="517"/>
        <end position="529"/>
    </location>
</feature>
<feature type="transmembrane region" description="Beta stranded" evidence="1">
    <location>
        <begin position="535"/>
        <end position="550"/>
    </location>
</feature>
<feature type="transmembrane region" description="Beta stranded" evidence="1">
    <location>
        <begin position="558"/>
        <end position="572"/>
    </location>
</feature>
<feature type="transmembrane region" description="Beta stranded" evidence="1">
    <location>
        <begin position="585"/>
        <end position="596"/>
    </location>
</feature>
<feature type="transmembrane region" description="Beta stranded" evidence="1">
    <location>
        <begin position="602"/>
        <end position="614"/>
    </location>
</feature>
<feature type="domain" description="TBDR plug" evidence="2">
    <location>
        <begin position="38"/>
        <end position="152"/>
    </location>
</feature>
<feature type="domain" description="TBDR beta-barrel" evidence="2">
    <location>
        <begin position="155"/>
        <end position="614"/>
    </location>
</feature>
<feature type="short sequence motif" description="TonB box">
    <location>
        <begin position="26"/>
        <end position="33"/>
    </location>
</feature>
<feature type="short sequence motif" description="TonB C-terminal box">
    <location>
        <begin position="597"/>
        <end position="614"/>
    </location>
</feature>
<feature type="binding site" evidence="1">
    <location>
        <position position="83"/>
    </location>
    <ligand>
        <name>cyanocob(III)alamin</name>
        <dbReference type="ChEBI" id="CHEBI:17439"/>
    </ligand>
</feature>
<feature type="binding site" evidence="1">
    <location>
        <position position="85"/>
    </location>
    <ligand>
        <name>cyanocob(III)alamin</name>
        <dbReference type="ChEBI" id="CHEBI:17439"/>
    </ligand>
</feature>
<feature type="binding site" evidence="1">
    <location>
        <position position="92"/>
    </location>
    <ligand>
        <name>cyanocob(III)alamin</name>
        <dbReference type="ChEBI" id="CHEBI:17439"/>
    </ligand>
</feature>
<feature type="binding site" evidence="1">
    <location>
        <begin position="110"/>
        <end position="111"/>
    </location>
    <ligand>
        <name>cyanocob(III)alamin</name>
        <dbReference type="ChEBI" id="CHEBI:17439"/>
    </ligand>
</feature>
<feature type="binding site" evidence="1">
    <location>
        <position position="199"/>
    </location>
    <ligand>
        <name>Ca(2+)</name>
        <dbReference type="ChEBI" id="CHEBI:29108"/>
        <label>1</label>
    </ligand>
</feature>
<feature type="binding site" evidence="1">
    <location>
        <position position="211"/>
    </location>
    <ligand>
        <name>Ca(2+)</name>
        <dbReference type="ChEBI" id="CHEBI:29108"/>
        <label>1</label>
    </ligand>
</feature>
<feature type="binding site" evidence="1">
    <location>
        <position position="213"/>
    </location>
    <ligand>
        <name>Ca(2+)</name>
        <dbReference type="ChEBI" id="CHEBI:29108"/>
        <label>1</label>
    </ligand>
</feature>
<feature type="binding site" evidence="1">
    <location>
        <position position="213"/>
    </location>
    <ligand>
        <name>Ca(2+)</name>
        <dbReference type="ChEBI" id="CHEBI:29108"/>
        <label>2</label>
    </ligand>
</feature>
<feature type="binding site" evidence="1">
    <location>
        <position position="215"/>
    </location>
    <ligand>
        <name>Ca(2+)</name>
        <dbReference type="ChEBI" id="CHEBI:29108"/>
        <label>1</label>
    </ligand>
</feature>
<feature type="binding site" evidence="1">
    <location>
        <position position="215"/>
    </location>
    <ligand>
        <name>Ca(2+)</name>
        <dbReference type="ChEBI" id="CHEBI:29108"/>
        <label>2</label>
    </ligand>
</feature>
<feature type="binding site" evidence="1">
    <location>
        <position position="249"/>
    </location>
    <ligand>
        <name>Ca(2+)</name>
        <dbReference type="ChEBI" id="CHEBI:29108"/>
        <label>2</label>
    </ligand>
</feature>
<feature type="binding site" evidence="1">
    <location>
        <position position="250"/>
    </location>
    <ligand>
        <name>Ca(2+)</name>
        <dbReference type="ChEBI" id="CHEBI:29108"/>
        <label>1</label>
    </ligand>
</feature>
<feature type="binding site" evidence="1">
    <location>
        <position position="250"/>
    </location>
    <ligand>
        <name>Ca(2+)</name>
        <dbReference type="ChEBI" id="CHEBI:29108"/>
        <label>2</label>
    </ligand>
</feature>
<feature type="binding site" evidence="1">
    <location>
        <position position="251"/>
    </location>
    <ligand>
        <name>cyanocob(III)alamin</name>
        <dbReference type="ChEBI" id="CHEBI:17439"/>
    </ligand>
</feature>
<feature type="binding site" evidence="1">
    <location>
        <position position="261"/>
    </location>
    <ligand>
        <name>Ca(2+)</name>
        <dbReference type="ChEBI" id="CHEBI:29108"/>
        <label>2</label>
    </ligand>
</feature>
<feature type="binding site" evidence="1">
    <location>
        <position position="309"/>
    </location>
    <ligand>
        <name>cyanocob(III)alamin</name>
        <dbReference type="ChEBI" id="CHEBI:17439"/>
    </ligand>
</feature>
<feature type="binding site" evidence="1">
    <location>
        <position position="517"/>
    </location>
    <ligand>
        <name>cyanocob(III)alamin</name>
        <dbReference type="ChEBI" id="CHEBI:17439"/>
    </ligand>
</feature>
<feature type="binding site" evidence="1">
    <location>
        <position position="551"/>
    </location>
    <ligand>
        <name>cyanocob(III)alamin</name>
        <dbReference type="ChEBI" id="CHEBI:17439"/>
    </ligand>
</feature>